<reference key="1">
    <citation type="journal article" date="1999" name="Microbiology">
        <title>Characterization of a molybdenum cofactor biosynthetic gene cluster in Rhodobacter capsulatus which is specific for the biogenesis of dimethylsulfoxide reductase.</title>
        <authorList>
            <person name="Solomon P.S."/>
            <person name="Shaw A.L."/>
            <person name="Lane I."/>
            <person name="Hanson G.R."/>
            <person name="Palmer T."/>
            <person name="McEwan A.G."/>
        </authorList>
    </citation>
    <scope>NUCLEOTIDE SEQUENCE [GENOMIC DNA]</scope>
    <source>
        <strain>DSM 938 / 37b4</strain>
    </source>
</reference>
<name>MOAA_RHOCA</name>
<evidence type="ECO:0000255" key="1">
    <source>
        <dbReference type="HAMAP-Rule" id="MF_01225"/>
    </source>
</evidence>
<evidence type="ECO:0000255" key="2">
    <source>
        <dbReference type="PROSITE-ProRule" id="PRU01266"/>
    </source>
</evidence>
<feature type="chain" id="PRO_0000152987" description="GTP 3',8-cyclase">
    <location>
        <begin position="1"/>
        <end position="328"/>
    </location>
</feature>
<feature type="domain" description="Radical SAM core" evidence="2">
    <location>
        <begin position="9"/>
        <end position="229"/>
    </location>
</feature>
<feature type="binding site" evidence="1">
    <location>
        <position position="18"/>
    </location>
    <ligand>
        <name>GTP</name>
        <dbReference type="ChEBI" id="CHEBI:37565"/>
    </ligand>
</feature>
<feature type="binding site" evidence="1">
    <location>
        <position position="25"/>
    </location>
    <ligand>
        <name>[4Fe-4S] cluster</name>
        <dbReference type="ChEBI" id="CHEBI:49883"/>
        <label>1</label>
        <note>4Fe-4S-S-AdoMet</note>
    </ligand>
</feature>
<feature type="binding site" evidence="1">
    <location>
        <position position="29"/>
    </location>
    <ligand>
        <name>[4Fe-4S] cluster</name>
        <dbReference type="ChEBI" id="CHEBI:49883"/>
        <label>1</label>
        <note>4Fe-4S-S-AdoMet</note>
    </ligand>
</feature>
<feature type="binding site" evidence="1">
    <location>
        <position position="31"/>
    </location>
    <ligand>
        <name>S-adenosyl-L-methionine</name>
        <dbReference type="ChEBI" id="CHEBI:59789"/>
    </ligand>
</feature>
<feature type="binding site" evidence="1">
    <location>
        <position position="32"/>
    </location>
    <ligand>
        <name>[4Fe-4S] cluster</name>
        <dbReference type="ChEBI" id="CHEBI:49883"/>
        <label>1</label>
        <note>4Fe-4S-S-AdoMet</note>
    </ligand>
</feature>
<feature type="binding site" evidence="1">
    <location>
        <position position="60"/>
    </location>
    <ligand>
        <name>GTP</name>
        <dbReference type="ChEBI" id="CHEBI:37565"/>
    </ligand>
</feature>
<feature type="binding site" evidence="1">
    <location>
        <position position="64"/>
    </location>
    <ligand>
        <name>S-adenosyl-L-methionine</name>
        <dbReference type="ChEBI" id="CHEBI:59789"/>
    </ligand>
</feature>
<feature type="binding site" evidence="1">
    <location>
        <position position="94"/>
    </location>
    <ligand>
        <name>GTP</name>
        <dbReference type="ChEBI" id="CHEBI:37565"/>
    </ligand>
</feature>
<feature type="binding site" evidence="1">
    <location>
        <position position="118"/>
    </location>
    <ligand>
        <name>S-adenosyl-L-methionine</name>
        <dbReference type="ChEBI" id="CHEBI:59789"/>
    </ligand>
</feature>
<feature type="binding site" evidence="1">
    <location>
        <position position="154"/>
    </location>
    <ligand>
        <name>GTP</name>
        <dbReference type="ChEBI" id="CHEBI:37565"/>
    </ligand>
</feature>
<feature type="binding site" evidence="1">
    <location>
        <position position="188"/>
    </location>
    <ligand>
        <name>S-adenosyl-L-methionine</name>
        <dbReference type="ChEBI" id="CHEBI:59789"/>
    </ligand>
</feature>
<feature type="binding site" evidence="1">
    <location>
        <position position="252"/>
    </location>
    <ligand>
        <name>[4Fe-4S] cluster</name>
        <dbReference type="ChEBI" id="CHEBI:49883"/>
        <label>2</label>
        <note>4Fe-4S-substrate</note>
    </ligand>
</feature>
<feature type="binding site" evidence="1">
    <location>
        <position position="255"/>
    </location>
    <ligand>
        <name>[4Fe-4S] cluster</name>
        <dbReference type="ChEBI" id="CHEBI:49883"/>
        <label>2</label>
        <note>4Fe-4S-substrate</note>
    </ligand>
</feature>
<feature type="binding site" evidence="1">
    <location>
        <begin position="257"/>
        <end position="259"/>
    </location>
    <ligand>
        <name>GTP</name>
        <dbReference type="ChEBI" id="CHEBI:37565"/>
    </ligand>
</feature>
<feature type="binding site" evidence="1">
    <location>
        <position position="269"/>
    </location>
    <ligand>
        <name>[4Fe-4S] cluster</name>
        <dbReference type="ChEBI" id="CHEBI:49883"/>
        <label>2</label>
        <note>4Fe-4S-substrate</note>
    </ligand>
</feature>
<accession>Q9X5W3</accession>
<organism>
    <name type="scientific">Rhodobacter capsulatus</name>
    <name type="common">Rhodopseudomonas capsulata</name>
    <dbReference type="NCBI Taxonomy" id="1061"/>
    <lineage>
        <taxon>Bacteria</taxon>
        <taxon>Pseudomonadati</taxon>
        <taxon>Pseudomonadota</taxon>
        <taxon>Alphaproteobacteria</taxon>
        <taxon>Rhodobacterales</taxon>
        <taxon>Rhodobacter group</taxon>
        <taxon>Rhodobacter</taxon>
    </lineage>
</organism>
<proteinExistence type="inferred from homology"/>
<sequence length="328" mass="35820">MLPDPLCDGFGRDVRYLRVSVTDRCDLRCSYCMKEDVTFLPRNQVLSLEELDRLGVRKLRVTGGEPLVRRGIGTFFAAMGTHLRAGRLDELTLTTNGTQLAAHAQSLAECGVKRVNVSLDTLQAEKYARLTRFGRIEQVFAGIAAAQAAGLRVKLNAMALKGVNDDEIFALTDWAAAHHCDLTFIELMPMGDIPAGTRLDQFWPLDDVRAHLETRFRLIDNGLNTGGPARYVTVAQTGQRIGFISPLSHNFCTSCNRVRLTCKGELYTCLGQEGSSDLRPVLRAGVEGEALAREIRAAIARKPAGHAFGYGPCSVAGQMVRGMNHTGG</sequence>
<comment type="function">
    <text evidence="1">Catalyzes the cyclization of GTP to (8S)-3',8-cyclo-7,8-dihydroguanosine 5'-triphosphate.</text>
</comment>
<comment type="catalytic activity">
    <reaction evidence="1">
        <text>GTP + AH2 + S-adenosyl-L-methionine = (8S)-3',8-cyclo-7,8-dihydroguanosine 5'-triphosphate + 5'-deoxyadenosine + L-methionine + A + H(+)</text>
        <dbReference type="Rhea" id="RHEA:49576"/>
        <dbReference type="ChEBI" id="CHEBI:13193"/>
        <dbReference type="ChEBI" id="CHEBI:15378"/>
        <dbReference type="ChEBI" id="CHEBI:17319"/>
        <dbReference type="ChEBI" id="CHEBI:17499"/>
        <dbReference type="ChEBI" id="CHEBI:37565"/>
        <dbReference type="ChEBI" id="CHEBI:57844"/>
        <dbReference type="ChEBI" id="CHEBI:59789"/>
        <dbReference type="ChEBI" id="CHEBI:131766"/>
        <dbReference type="EC" id="4.1.99.22"/>
    </reaction>
</comment>
<comment type="cofactor">
    <cofactor evidence="1">
        <name>[4Fe-4S] cluster</name>
        <dbReference type="ChEBI" id="CHEBI:49883"/>
    </cofactor>
    <text evidence="1">Binds 2 [4Fe-4S] clusters. Binds 1 [4Fe-4S] cluster coordinated with 3 cysteines and an exchangeable S-adenosyl-L-methionine and 1 [4Fe-4S] cluster coordinated with 3 cysteines and the GTP-derived substrate.</text>
</comment>
<comment type="pathway">
    <text evidence="1">Cofactor biosynthesis; molybdopterin biosynthesis.</text>
</comment>
<comment type="subunit">
    <text evidence="1">Monomer and homodimer.</text>
</comment>
<comment type="miscellaneous">
    <text>Seems to be specifically required for the biogenesis of DMSO reductase.</text>
</comment>
<comment type="miscellaneous">
    <text>PubMed:10411269 shows that MoaA contains a 3Fe-4S cluster, but it may actually be two 4Fe-4S clusters as was shown in the crystallographic study of the protein homolog from Staphylococcus aureus.</text>
</comment>
<comment type="similarity">
    <text evidence="1">Belongs to the radical SAM superfamily. MoaA family.</text>
</comment>
<dbReference type="EC" id="4.1.99.22" evidence="1"/>
<dbReference type="EMBL" id="AF128444">
    <property type="protein sequence ID" value="AAD21201.1"/>
    <property type="molecule type" value="Genomic_DNA"/>
</dbReference>
<dbReference type="SMR" id="Q9X5W3"/>
<dbReference type="UniPathway" id="UPA00344"/>
<dbReference type="GO" id="GO:0051539">
    <property type="term" value="F:4 iron, 4 sulfur cluster binding"/>
    <property type="evidence" value="ECO:0007669"/>
    <property type="project" value="UniProtKB-UniRule"/>
</dbReference>
<dbReference type="GO" id="GO:0061799">
    <property type="term" value="F:cyclic pyranopterin monophosphate synthase activity"/>
    <property type="evidence" value="ECO:0007669"/>
    <property type="project" value="TreeGrafter"/>
</dbReference>
<dbReference type="GO" id="GO:0061798">
    <property type="term" value="F:GTP 3',8'-cyclase activity"/>
    <property type="evidence" value="ECO:0007669"/>
    <property type="project" value="UniProtKB-UniRule"/>
</dbReference>
<dbReference type="GO" id="GO:0005525">
    <property type="term" value="F:GTP binding"/>
    <property type="evidence" value="ECO:0007669"/>
    <property type="project" value="UniProtKB-UniRule"/>
</dbReference>
<dbReference type="GO" id="GO:0046872">
    <property type="term" value="F:metal ion binding"/>
    <property type="evidence" value="ECO:0007669"/>
    <property type="project" value="UniProtKB-KW"/>
</dbReference>
<dbReference type="GO" id="GO:1904047">
    <property type="term" value="F:S-adenosyl-L-methionine binding"/>
    <property type="evidence" value="ECO:0007669"/>
    <property type="project" value="UniProtKB-UniRule"/>
</dbReference>
<dbReference type="GO" id="GO:0006777">
    <property type="term" value="P:Mo-molybdopterin cofactor biosynthetic process"/>
    <property type="evidence" value="ECO:0007669"/>
    <property type="project" value="UniProtKB-UniRule"/>
</dbReference>
<dbReference type="CDD" id="cd01335">
    <property type="entry name" value="Radical_SAM"/>
    <property type="match status" value="1"/>
</dbReference>
<dbReference type="CDD" id="cd21117">
    <property type="entry name" value="Twitch_MoaA"/>
    <property type="match status" value="1"/>
</dbReference>
<dbReference type="Gene3D" id="3.20.20.70">
    <property type="entry name" value="Aldolase class I"/>
    <property type="match status" value="1"/>
</dbReference>
<dbReference type="HAMAP" id="MF_01225_B">
    <property type="entry name" value="MoaA_B"/>
    <property type="match status" value="1"/>
</dbReference>
<dbReference type="InterPro" id="IPR013785">
    <property type="entry name" value="Aldolase_TIM"/>
</dbReference>
<dbReference type="InterPro" id="IPR006638">
    <property type="entry name" value="Elp3/MiaA/NifB-like_rSAM"/>
</dbReference>
<dbReference type="InterPro" id="IPR013483">
    <property type="entry name" value="MoaA"/>
</dbReference>
<dbReference type="InterPro" id="IPR000385">
    <property type="entry name" value="MoaA_NifB_PqqE_Fe-S-bd_CS"/>
</dbReference>
<dbReference type="InterPro" id="IPR010505">
    <property type="entry name" value="MoaA_twitch"/>
</dbReference>
<dbReference type="InterPro" id="IPR050105">
    <property type="entry name" value="MoCo_biosynth_MoaA/MoaC"/>
</dbReference>
<dbReference type="InterPro" id="IPR007197">
    <property type="entry name" value="rSAM"/>
</dbReference>
<dbReference type="NCBIfam" id="TIGR02666">
    <property type="entry name" value="moaA"/>
    <property type="match status" value="1"/>
</dbReference>
<dbReference type="PANTHER" id="PTHR22960:SF0">
    <property type="entry name" value="MOLYBDENUM COFACTOR BIOSYNTHESIS PROTEIN 1"/>
    <property type="match status" value="1"/>
</dbReference>
<dbReference type="PANTHER" id="PTHR22960">
    <property type="entry name" value="MOLYBDOPTERIN COFACTOR SYNTHESIS PROTEIN A"/>
    <property type="match status" value="1"/>
</dbReference>
<dbReference type="Pfam" id="PF06463">
    <property type="entry name" value="Mob_synth_C"/>
    <property type="match status" value="1"/>
</dbReference>
<dbReference type="Pfam" id="PF04055">
    <property type="entry name" value="Radical_SAM"/>
    <property type="match status" value="1"/>
</dbReference>
<dbReference type="SFLD" id="SFLDG01383">
    <property type="entry name" value="cyclic_pyranopterin_phosphate"/>
    <property type="match status" value="1"/>
</dbReference>
<dbReference type="SFLD" id="SFLDG01072">
    <property type="entry name" value="dehydrogenase_like"/>
    <property type="match status" value="1"/>
</dbReference>
<dbReference type="SMART" id="SM00729">
    <property type="entry name" value="Elp3"/>
    <property type="match status" value="1"/>
</dbReference>
<dbReference type="SUPFAM" id="SSF102114">
    <property type="entry name" value="Radical SAM enzymes"/>
    <property type="match status" value="1"/>
</dbReference>
<dbReference type="PROSITE" id="PS01305">
    <property type="entry name" value="MOAA_NIFB_PQQE"/>
    <property type="match status" value="1"/>
</dbReference>
<dbReference type="PROSITE" id="PS51918">
    <property type="entry name" value="RADICAL_SAM"/>
    <property type="match status" value="1"/>
</dbReference>
<gene>
    <name evidence="1" type="primary">moaA</name>
</gene>
<keyword id="KW-0004">4Fe-4S</keyword>
<keyword id="KW-0342">GTP-binding</keyword>
<keyword id="KW-0408">Iron</keyword>
<keyword id="KW-0411">Iron-sulfur</keyword>
<keyword id="KW-0456">Lyase</keyword>
<keyword id="KW-0479">Metal-binding</keyword>
<keyword id="KW-0501">Molybdenum cofactor biosynthesis</keyword>
<keyword id="KW-0547">Nucleotide-binding</keyword>
<keyword id="KW-0949">S-adenosyl-L-methionine</keyword>
<protein>
    <recommendedName>
        <fullName evidence="1">GTP 3',8-cyclase</fullName>
        <ecNumber evidence="1">4.1.99.22</ecNumber>
    </recommendedName>
    <alternativeName>
        <fullName evidence="1">Molybdenum cofactor biosynthesis protein A</fullName>
    </alternativeName>
</protein>